<accession>A9WH65</accession>
<name>RS10_CHLAA</name>
<feature type="chain" id="PRO_1000081541" description="Small ribosomal subunit protein uS10">
    <location>
        <begin position="1"/>
        <end position="102"/>
    </location>
</feature>
<dbReference type="EMBL" id="CP000909">
    <property type="protein sequence ID" value="ABY35577.1"/>
    <property type="molecule type" value="Genomic_DNA"/>
</dbReference>
<dbReference type="RefSeq" id="WP_012258230.1">
    <property type="nucleotide sequence ID" value="NC_010175.1"/>
</dbReference>
<dbReference type="RefSeq" id="YP_001635966.1">
    <property type="nucleotide sequence ID" value="NC_010175.1"/>
</dbReference>
<dbReference type="SMR" id="A9WH65"/>
<dbReference type="FunCoup" id="A9WH65">
    <property type="interactions" value="517"/>
</dbReference>
<dbReference type="STRING" id="324602.Caur_2368"/>
<dbReference type="EnsemblBacteria" id="ABY35577">
    <property type="protein sequence ID" value="ABY35577"/>
    <property type="gene ID" value="Caur_2368"/>
</dbReference>
<dbReference type="KEGG" id="cau:Caur_2368"/>
<dbReference type="PATRIC" id="fig|324602.8.peg.2682"/>
<dbReference type="eggNOG" id="COG0051">
    <property type="taxonomic scope" value="Bacteria"/>
</dbReference>
<dbReference type="HOGENOM" id="CLU_122625_1_3_0"/>
<dbReference type="InParanoid" id="A9WH65"/>
<dbReference type="Proteomes" id="UP000002008">
    <property type="component" value="Chromosome"/>
</dbReference>
<dbReference type="GO" id="GO:0015935">
    <property type="term" value="C:small ribosomal subunit"/>
    <property type="evidence" value="ECO:0000318"/>
    <property type="project" value="GO_Central"/>
</dbReference>
<dbReference type="GO" id="GO:0003735">
    <property type="term" value="F:structural constituent of ribosome"/>
    <property type="evidence" value="ECO:0000318"/>
    <property type="project" value="GO_Central"/>
</dbReference>
<dbReference type="GO" id="GO:0000049">
    <property type="term" value="F:tRNA binding"/>
    <property type="evidence" value="ECO:0007669"/>
    <property type="project" value="UniProtKB-UniRule"/>
</dbReference>
<dbReference type="GO" id="GO:0006412">
    <property type="term" value="P:translation"/>
    <property type="evidence" value="ECO:0007669"/>
    <property type="project" value="UniProtKB-UniRule"/>
</dbReference>
<dbReference type="FunFam" id="3.30.70.600:FF:000001">
    <property type="entry name" value="30S ribosomal protein S10"/>
    <property type="match status" value="1"/>
</dbReference>
<dbReference type="Gene3D" id="3.30.70.600">
    <property type="entry name" value="Ribosomal protein S10 domain"/>
    <property type="match status" value="1"/>
</dbReference>
<dbReference type="HAMAP" id="MF_00508">
    <property type="entry name" value="Ribosomal_uS10"/>
    <property type="match status" value="1"/>
</dbReference>
<dbReference type="InterPro" id="IPR001848">
    <property type="entry name" value="Ribosomal_uS10"/>
</dbReference>
<dbReference type="InterPro" id="IPR018268">
    <property type="entry name" value="Ribosomal_uS10_CS"/>
</dbReference>
<dbReference type="InterPro" id="IPR027486">
    <property type="entry name" value="Ribosomal_uS10_dom"/>
</dbReference>
<dbReference type="InterPro" id="IPR036838">
    <property type="entry name" value="Ribosomal_uS10_dom_sf"/>
</dbReference>
<dbReference type="NCBIfam" id="NF001861">
    <property type="entry name" value="PRK00596.1"/>
    <property type="match status" value="1"/>
</dbReference>
<dbReference type="NCBIfam" id="TIGR01049">
    <property type="entry name" value="rpsJ_bact"/>
    <property type="match status" value="1"/>
</dbReference>
<dbReference type="PANTHER" id="PTHR11700">
    <property type="entry name" value="30S RIBOSOMAL PROTEIN S10 FAMILY MEMBER"/>
    <property type="match status" value="1"/>
</dbReference>
<dbReference type="Pfam" id="PF00338">
    <property type="entry name" value="Ribosomal_S10"/>
    <property type="match status" value="1"/>
</dbReference>
<dbReference type="PRINTS" id="PR00971">
    <property type="entry name" value="RIBOSOMALS10"/>
</dbReference>
<dbReference type="SMART" id="SM01403">
    <property type="entry name" value="Ribosomal_S10"/>
    <property type="match status" value="1"/>
</dbReference>
<dbReference type="SUPFAM" id="SSF54999">
    <property type="entry name" value="Ribosomal protein S10"/>
    <property type="match status" value="1"/>
</dbReference>
<dbReference type="PROSITE" id="PS00361">
    <property type="entry name" value="RIBOSOMAL_S10"/>
    <property type="match status" value="1"/>
</dbReference>
<reference key="1">
    <citation type="journal article" date="2011" name="BMC Genomics">
        <title>Complete genome sequence of the filamentous anoxygenic phototrophic bacterium Chloroflexus aurantiacus.</title>
        <authorList>
            <person name="Tang K.H."/>
            <person name="Barry K."/>
            <person name="Chertkov O."/>
            <person name="Dalin E."/>
            <person name="Han C.S."/>
            <person name="Hauser L.J."/>
            <person name="Honchak B.M."/>
            <person name="Karbach L.E."/>
            <person name="Land M.L."/>
            <person name="Lapidus A."/>
            <person name="Larimer F.W."/>
            <person name="Mikhailova N."/>
            <person name="Pitluck S."/>
            <person name="Pierson B.K."/>
            <person name="Blankenship R.E."/>
        </authorList>
    </citation>
    <scope>NUCLEOTIDE SEQUENCE [LARGE SCALE GENOMIC DNA]</scope>
    <source>
        <strain>ATCC 29366 / DSM 635 / J-10-fl</strain>
    </source>
</reference>
<sequence length="102" mass="11547">MAKQKVRIRLKAYDHKILDQSARQIVEAAERTGALVAGPVPLPTKIERYSVIRSGFIDKDSQEQFEIRTHKRLIDVLDPSQQTINALMKLNLPAGVDIEIKL</sequence>
<evidence type="ECO:0000255" key="1">
    <source>
        <dbReference type="HAMAP-Rule" id="MF_00508"/>
    </source>
</evidence>
<evidence type="ECO:0000305" key="2"/>
<proteinExistence type="inferred from homology"/>
<gene>
    <name evidence="1" type="primary">rpsJ</name>
    <name type="ordered locus">Caur_2368</name>
</gene>
<protein>
    <recommendedName>
        <fullName evidence="1">Small ribosomal subunit protein uS10</fullName>
    </recommendedName>
    <alternativeName>
        <fullName evidence="2">30S ribosomal protein S10</fullName>
    </alternativeName>
</protein>
<comment type="function">
    <text evidence="1">Involved in the binding of tRNA to the ribosomes.</text>
</comment>
<comment type="subunit">
    <text evidence="1">Part of the 30S ribosomal subunit.</text>
</comment>
<comment type="similarity">
    <text evidence="1">Belongs to the universal ribosomal protein uS10 family.</text>
</comment>
<keyword id="KW-1185">Reference proteome</keyword>
<keyword id="KW-0687">Ribonucleoprotein</keyword>
<keyword id="KW-0689">Ribosomal protein</keyword>
<organism>
    <name type="scientific">Chloroflexus aurantiacus (strain ATCC 29366 / DSM 635 / J-10-fl)</name>
    <dbReference type="NCBI Taxonomy" id="324602"/>
    <lineage>
        <taxon>Bacteria</taxon>
        <taxon>Bacillati</taxon>
        <taxon>Chloroflexota</taxon>
        <taxon>Chloroflexia</taxon>
        <taxon>Chloroflexales</taxon>
        <taxon>Chloroflexineae</taxon>
        <taxon>Chloroflexaceae</taxon>
        <taxon>Chloroflexus</taxon>
    </lineage>
</organism>